<evidence type="ECO:0000250" key="1"/>
<evidence type="ECO:0000255" key="2">
    <source>
        <dbReference type="HAMAP-Rule" id="MF_01976"/>
    </source>
</evidence>
<sequence>MRKRIGILTSGGDCPGLNCVIRAVVSHATLTYDWEVLGIPYATQGLRERQAIALNMHGWDLRGIDPLLNMGGTILGTINKGDTLAHVDEMLASYQALALDALIVIGGDGSLGILHELASRGNWNLVAIPKTIDNDVALTERAVGFDTAVNTIVDALNRLTFTAASHDRVMIVEVMGRSAGHLALHAGIAGGADVILIPEISYTISGLCQHIAELRDRWQRKFAIVVVAEGAKLCLEDVQENIASSCAPSKCGRGQYIADQIAQCSKNLIDTRVSVLGHIQRGGIPSALDRLTATVFGKTAVDLIAQGKFGQMVAWQNGEAIPVPIQDVVAQSPLHVNPQGSLVQSARCLGIYVGEKT</sequence>
<proteinExistence type="inferred from homology"/>
<reference key="1">
    <citation type="journal article" date="2001" name="DNA Res.">
        <title>Complete genomic sequence of the filamentous nitrogen-fixing cyanobacterium Anabaena sp. strain PCC 7120.</title>
        <authorList>
            <person name="Kaneko T."/>
            <person name="Nakamura Y."/>
            <person name="Wolk C.P."/>
            <person name="Kuritz T."/>
            <person name="Sasamoto S."/>
            <person name="Watanabe A."/>
            <person name="Iriguchi M."/>
            <person name="Ishikawa A."/>
            <person name="Kawashima K."/>
            <person name="Kimura T."/>
            <person name="Kishida Y."/>
            <person name="Kohara M."/>
            <person name="Matsumoto M."/>
            <person name="Matsuno A."/>
            <person name="Muraki A."/>
            <person name="Nakazaki N."/>
            <person name="Shimpo S."/>
            <person name="Sugimoto M."/>
            <person name="Takazawa M."/>
            <person name="Yamada M."/>
            <person name="Yasuda M."/>
            <person name="Tabata S."/>
        </authorList>
    </citation>
    <scope>NUCLEOTIDE SEQUENCE [LARGE SCALE GENOMIC DNA]</scope>
    <source>
        <strain>PCC 7120 / SAG 25.82 / UTEX 2576</strain>
    </source>
</reference>
<comment type="function">
    <text evidence="2">Catalyzes the phosphorylation of D-fructose 6-phosphate to fructose 1,6-bisphosphate by ATP, the first committing step of glycolysis.</text>
</comment>
<comment type="catalytic activity">
    <reaction evidence="2">
        <text>beta-D-fructose 6-phosphate + ATP = beta-D-fructose 1,6-bisphosphate + ADP + H(+)</text>
        <dbReference type="Rhea" id="RHEA:16109"/>
        <dbReference type="ChEBI" id="CHEBI:15378"/>
        <dbReference type="ChEBI" id="CHEBI:30616"/>
        <dbReference type="ChEBI" id="CHEBI:32966"/>
        <dbReference type="ChEBI" id="CHEBI:57634"/>
        <dbReference type="ChEBI" id="CHEBI:456216"/>
        <dbReference type="EC" id="2.7.1.11"/>
    </reaction>
</comment>
<comment type="cofactor">
    <cofactor evidence="2">
        <name>Mg(2+)</name>
        <dbReference type="ChEBI" id="CHEBI:18420"/>
    </cofactor>
</comment>
<comment type="activity regulation">
    <text evidence="1">Subject to allosteric activation by ADP and other diphosphonucleosides, and inhibition by phosphoenolpyruvate.</text>
</comment>
<comment type="pathway">
    <text evidence="2">Carbohydrate degradation; glycolysis; D-glyceraldehyde 3-phosphate and glycerone phosphate from D-glucose: step 3/4.</text>
</comment>
<comment type="subunit">
    <text evidence="2">Homodimer or homotetramer.</text>
</comment>
<comment type="subcellular location">
    <subcellularLocation>
        <location evidence="2">Cytoplasm</location>
    </subcellularLocation>
</comment>
<comment type="similarity">
    <text evidence="2">Belongs to the phosphofructokinase type A (PFKA) family. Mixed-substrate PFK group III subfamily.</text>
</comment>
<accession>Q8YVR1</accession>
<name>PFKA2_NOSS1</name>
<organism>
    <name type="scientific">Nostoc sp. (strain PCC 7120 / SAG 25.82 / UTEX 2576)</name>
    <dbReference type="NCBI Taxonomy" id="103690"/>
    <lineage>
        <taxon>Bacteria</taxon>
        <taxon>Bacillati</taxon>
        <taxon>Cyanobacteriota</taxon>
        <taxon>Cyanophyceae</taxon>
        <taxon>Nostocales</taxon>
        <taxon>Nostocaceae</taxon>
        <taxon>Nostoc</taxon>
    </lineage>
</organism>
<protein>
    <recommendedName>
        <fullName evidence="2">ATP-dependent 6-phosphofructokinase 2</fullName>
        <shortName evidence="2">ATP-PFK 2</shortName>
        <shortName evidence="2">Phosphofructokinase 2</shortName>
        <ecNumber evidence="2">2.7.1.11</ecNumber>
    </recommendedName>
    <alternativeName>
        <fullName evidence="2">Phosphohexokinase 2</fullName>
    </alternativeName>
</protein>
<feature type="chain" id="PRO_0000111930" description="ATP-dependent 6-phosphofructokinase 2">
    <location>
        <begin position="1"/>
        <end position="357"/>
    </location>
</feature>
<feature type="active site" description="Proton acceptor" evidence="2">
    <location>
        <position position="133"/>
    </location>
</feature>
<feature type="binding site" evidence="2">
    <location>
        <position position="12"/>
    </location>
    <ligand>
        <name>ATP</name>
        <dbReference type="ChEBI" id="CHEBI:30616"/>
    </ligand>
</feature>
<feature type="binding site" evidence="2">
    <location>
        <begin position="80"/>
        <end position="81"/>
    </location>
    <ligand>
        <name>ATP</name>
        <dbReference type="ChEBI" id="CHEBI:30616"/>
    </ligand>
</feature>
<feature type="binding site" evidence="2">
    <location>
        <begin position="107"/>
        <end position="110"/>
    </location>
    <ligand>
        <name>ATP</name>
        <dbReference type="ChEBI" id="CHEBI:30616"/>
    </ligand>
</feature>
<feature type="binding site" evidence="2">
    <location>
        <position position="108"/>
    </location>
    <ligand>
        <name>Mg(2+)</name>
        <dbReference type="ChEBI" id="CHEBI:18420"/>
        <note>catalytic</note>
    </ligand>
</feature>
<feature type="binding site" description="in other chain" evidence="2">
    <location>
        <begin position="131"/>
        <end position="133"/>
    </location>
    <ligand>
        <name>substrate</name>
        <note>ligand shared between dimeric partners</note>
    </ligand>
</feature>
<feature type="binding site" evidence="2">
    <location>
        <position position="168"/>
    </location>
    <ligand>
        <name>substrate</name>
        <note>ligand shared between dimeric partners</note>
    </ligand>
</feature>
<feature type="binding site" description="in other chain" evidence="2">
    <location>
        <begin position="175"/>
        <end position="177"/>
    </location>
    <ligand>
        <name>substrate</name>
        <note>ligand shared between dimeric partners</note>
    </ligand>
</feature>
<feature type="binding site" description="in other chain" evidence="2">
    <location>
        <position position="229"/>
    </location>
    <ligand>
        <name>substrate</name>
        <note>ligand shared between dimeric partners</note>
    </ligand>
</feature>
<feature type="binding site" evidence="2">
    <location>
        <position position="272"/>
    </location>
    <ligand>
        <name>substrate</name>
        <note>ligand shared between dimeric partners</note>
    </ligand>
</feature>
<feature type="binding site" description="in other chain" evidence="2">
    <location>
        <begin position="278"/>
        <end position="281"/>
    </location>
    <ligand>
        <name>substrate</name>
        <note>ligand shared between dimeric partners</note>
    </ligand>
</feature>
<feature type="site" description="Important for substrate specificity; cannot use PPi as phosphoryl donor" evidence="2">
    <location>
        <position position="109"/>
    </location>
</feature>
<gene>
    <name evidence="2" type="primary">pfkA2</name>
    <name type="ordered locus">alr1913</name>
</gene>
<keyword id="KW-0067">ATP-binding</keyword>
<keyword id="KW-0963">Cytoplasm</keyword>
<keyword id="KW-0324">Glycolysis</keyword>
<keyword id="KW-0418">Kinase</keyword>
<keyword id="KW-0460">Magnesium</keyword>
<keyword id="KW-0479">Metal-binding</keyword>
<keyword id="KW-0547">Nucleotide-binding</keyword>
<keyword id="KW-1185">Reference proteome</keyword>
<keyword id="KW-0808">Transferase</keyword>
<dbReference type="EC" id="2.7.1.11" evidence="2"/>
<dbReference type="EMBL" id="BA000019">
    <property type="protein sequence ID" value="BAB73612.1"/>
    <property type="molecule type" value="Genomic_DNA"/>
</dbReference>
<dbReference type="PIR" id="AC2045">
    <property type="entry name" value="AC2045"/>
</dbReference>
<dbReference type="RefSeq" id="WP_010996077.1">
    <property type="nucleotide sequence ID" value="NZ_RSCN01000031.1"/>
</dbReference>
<dbReference type="SMR" id="Q8YVR1"/>
<dbReference type="STRING" id="103690.gene:10493932"/>
<dbReference type="KEGG" id="ana:alr1913"/>
<dbReference type="eggNOG" id="COG0205">
    <property type="taxonomic scope" value="Bacteria"/>
</dbReference>
<dbReference type="OrthoDB" id="9802503at2"/>
<dbReference type="UniPathway" id="UPA00109">
    <property type="reaction ID" value="UER00182"/>
</dbReference>
<dbReference type="Proteomes" id="UP000002483">
    <property type="component" value="Chromosome"/>
</dbReference>
<dbReference type="GO" id="GO:0005945">
    <property type="term" value="C:6-phosphofructokinase complex"/>
    <property type="evidence" value="ECO:0007669"/>
    <property type="project" value="TreeGrafter"/>
</dbReference>
<dbReference type="GO" id="GO:0003872">
    <property type="term" value="F:6-phosphofructokinase activity"/>
    <property type="evidence" value="ECO:0007669"/>
    <property type="project" value="UniProtKB-UniRule"/>
</dbReference>
<dbReference type="GO" id="GO:0016208">
    <property type="term" value="F:AMP binding"/>
    <property type="evidence" value="ECO:0007669"/>
    <property type="project" value="TreeGrafter"/>
</dbReference>
<dbReference type="GO" id="GO:0005524">
    <property type="term" value="F:ATP binding"/>
    <property type="evidence" value="ECO:0007669"/>
    <property type="project" value="UniProtKB-KW"/>
</dbReference>
<dbReference type="GO" id="GO:0047334">
    <property type="term" value="F:diphosphate-fructose-6-phosphate 1-phosphotransferase activity"/>
    <property type="evidence" value="ECO:0007669"/>
    <property type="project" value="InterPro"/>
</dbReference>
<dbReference type="GO" id="GO:0070095">
    <property type="term" value="F:fructose-6-phosphate binding"/>
    <property type="evidence" value="ECO:0007669"/>
    <property type="project" value="TreeGrafter"/>
</dbReference>
<dbReference type="GO" id="GO:0042802">
    <property type="term" value="F:identical protein binding"/>
    <property type="evidence" value="ECO:0007669"/>
    <property type="project" value="TreeGrafter"/>
</dbReference>
<dbReference type="GO" id="GO:0046872">
    <property type="term" value="F:metal ion binding"/>
    <property type="evidence" value="ECO:0007669"/>
    <property type="project" value="UniProtKB-KW"/>
</dbReference>
<dbReference type="GO" id="GO:0048029">
    <property type="term" value="F:monosaccharide binding"/>
    <property type="evidence" value="ECO:0007669"/>
    <property type="project" value="TreeGrafter"/>
</dbReference>
<dbReference type="GO" id="GO:0061621">
    <property type="term" value="P:canonical glycolysis"/>
    <property type="evidence" value="ECO:0007669"/>
    <property type="project" value="TreeGrafter"/>
</dbReference>
<dbReference type="GO" id="GO:0030388">
    <property type="term" value="P:fructose 1,6-bisphosphate metabolic process"/>
    <property type="evidence" value="ECO:0007669"/>
    <property type="project" value="TreeGrafter"/>
</dbReference>
<dbReference type="GO" id="GO:0006002">
    <property type="term" value="P:fructose 6-phosphate metabolic process"/>
    <property type="evidence" value="ECO:0007669"/>
    <property type="project" value="InterPro"/>
</dbReference>
<dbReference type="FunFam" id="3.40.50.460:FF:000002">
    <property type="entry name" value="ATP-dependent 6-phosphofructokinase"/>
    <property type="match status" value="1"/>
</dbReference>
<dbReference type="Gene3D" id="3.40.50.450">
    <property type="match status" value="1"/>
</dbReference>
<dbReference type="Gene3D" id="3.40.50.460">
    <property type="entry name" value="Phosphofructokinase domain"/>
    <property type="match status" value="1"/>
</dbReference>
<dbReference type="HAMAP" id="MF_01976">
    <property type="entry name" value="Phosphofructokinase_III"/>
    <property type="match status" value="1"/>
</dbReference>
<dbReference type="InterPro" id="IPR022953">
    <property type="entry name" value="ATP_PFK"/>
</dbReference>
<dbReference type="InterPro" id="IPR012003">
    <property type="entry name" value="ATP_PFK_prok-type"/>
</dbReference>
<dbReference type="InterPro" id="IPR015912">
    <property type="entry name" value="Phosphofructokinase_CS"/>
</dbReference>
<dbReference type="InterPro" id="IPR000023">
    <property type="entry name" value="Phosphofructokinase_dom"/>
</dbReference>
<dbReference type="InterPro" id="IPR012829">
    <property type="entry name" value="Phosphofructokinase_III"/>
</dbReference>
<dbReference type="InterPro" id="IPR035966">
    <property type="entry name" value="PKF_sf"/>
</dbReference>
<dbReference type="NCBIfam" id="NF002872">
    <property type="entry name" value="PRK03202.1"/>
    <property type="match status" value="1"/>
</dbReference>
<dbReference type="PANTHER" id="PTHR13697:SF52">
    <property type="entry name" value="ATP-DEPENDENT 6-PHOSPHOFRUCTOKINASE 3"/>
    <property type="match status" value="1"/>
</dbReference>
<dbReference type="PANTHER" id="PTHR13697">
    <property type="entry name" value="PHOSPHOFRUCTOKINASE"/>
    <property type="match status" value="1"/>
</dbReference>
<dbReference type="Pfam" id="PF00365">
    <property type="entry name" value="PFK"/>
    <property type="match status" value="1"/>
</dbReference>
<dbReference type="PIRSF" id="PIRSF000532">
    <property type="entry name" value="ATP_PFK_prok"/>
    <property type="match status" value="1"/>
</dbReference>
<dbReference type="PRINTS" id="PR00476">
    <property type="entry name" value="PHFRCTKINASE"/>
</dbReference>
<dbReference type="SUPFAM" id="SSF53784">
    <property type="entry name" value="Phosphofructokinase"/>
    <property type="match status" value="1"/>
</dbReference>
<dbReference type="PROSITE" id="PS00433">
    <property type="entry name" value="PHOSPHOFRUCTOKINASE"/>
    <property type="match status" value="1"/>
</dbReference>